<name>HIS7_SHOC1</name>
<sequence length="195" mass="21756">MARSYELTRTTGETDISLRLNLDGEGKADIETGVPFMEHMLDLFAKHGQFDLFVKASGDIEVDAHHTTEDLGICIGQAVKEALGTKEGIKRYGNAFVPMDETLAQVVVDLSNRPHLEFRADFPSQKVGTFDTELVHEFFWKLALEARMNLHIIVHYGHNTHHIIEAIFKACARALDEATAIDPRIKGILSTKGLL</sequence>
<gene>
    <name evidence="1" type="primary">hisB</name>
    <name type="ordered locus">ABC3047</name>
</gene>
<proteinExistence type="inferred from homology"/>
<comment type="catalytic activity">
    <reaction evidence="1">
        <text>D-erythro-1-(imidazol-4-yl)glycerol 3-phosphate = 3-(imidazol-4-yl)-2-oxopropyl phosphate + H2O</text>
        <dbReference type="Rhea" id="RHEA:11040"/>
        <dbReference type="ChEBI" id="CHEBI:15377"/>
        <dbReference type="ChEBI" id="CHEBI:57766"/>
        <dbReference type="ChEBI" id="CHEBI:58278"/>
        <dbReference type="EC" id="4.2.1.19"/>
    </reaction>
</comment>
<comment type="pathway">
    <text evidence="1">Amino-acid biosynthesis; L-histidine biosynthesis; L-histidine from 5-phospho-alpha-D-ribose 1-diphosphate: step 6/9.</text>
</comment>
<comment type="subcellular location">
    <subcellularLocation>
        <location evidence="1">Cytoplasm</location>
    </subcellularLocation>
</comment>
<comment type="similarity">
    <text evidence="1">Belongs to the imidazoleglycerol-phosphate dehydratase family.</text>
</comment>
<evidence type="ECO:0000255" key="1">
    <source>
        <dbReference type="HAMAP-Rule" id="MF_00076"/>
    </source>
</evidence>
<dbReference type="EC" id="4.2.1.19" evidence="1"/>
<dbReference type="EMBL" id="AP006627">
    <property type="protein sequence ID" value="BAD65581.1"/>
    <property type="molecule type" value="Genomic_DNA"/>
</dbReference>
<dbReference type="RefSeq" id="WP_011247889.1">
    <property type="nucleotide sequence ID" value="NC_006582.1"/>
</dbReference>
<dbReference type="SMR" id="Q5WDH9"/>
<dbReference type="STRING" id="66692.ABC3047"/>
<dbReference type="KEGG" id="bcl:ABC3047"/>
<dbReference type="eggNOG" id="COG0131">
    <property type="taxonomic scope" value="Bacteria"/>
</dbReference>
<dbReference type="HOGENOM" id="CLU_044308_2_0_9"/>
<dbReference type="OrthoDB" id="9790411at2"/>
<dbReference type="UniPathway" id="UPA00031">
    <property type="reaction ID" value="UER00011"/>
</dbReference>
<dbReference type="Proteomes" id="UP000001168">
    <property type="component" value="Chromosome"/>
</dbReference>
<dbReference type="GO" id="GO:0005737">
    <property type="term" value="C:cytoplasm"/>
    <property type="evidence" value="ECO:0007669"/>
    <property type="project" value="UniProtKB-SubCell"/>
</dbReference>
<dbReference type="GO" id="GO:0004424">
    <property type="term" value="F:imidazoleglycerol-phosphate dehydratase activity"/>
    <property type="evidence" value="ECO:0007669"/>
    <property type="project" value="UniProtKB-UniRule"/>
</dbReference>
<dbReference type="GO" id="GO:0000105">
    <property type="term" value="P:L-histidine biosynthetic process"/>
    <property type="evidence" value="ECO:0007669"/>
    <property type="project" value="UniProtKB-UniRule"/>
</dbReference>
<dbReference type="CDD" id="cd07914">
    <property type="entry name" value="IGPD"/>
    <property type="match status" value="1"/>
</dbReference>
<dbReference type="FunFam" id="3.30.230.40:FF:000001">
    <property type="entry name" value="Imidazoleglycerol-phosphate dehydratase HisB"/>
    <property type="match status" value="1"/>
</dbReference>
<dbReference type="FunFam" id="3.30.230.40:FF:000003">
    <property type="entry name" value="Imidazoleglycerol-phosphate dehydratase HisB"/>
    <property type="match status" value="1"/>
</dbReference>
<dbReference type="Gene3D" id="3.30.230.40">
    <property type="entry name" value="Imidazole glycerol phosphate dehydratase, domain 1"/>
    <property type="match status" value="2"/>
</dbReference>
<dbReference type="HAMAP" id="MF_00076">
    <property type="entry name" value="HisB"/>
    <property type="match status" value="1"/>
</dbReference>
<dbReference type="InterPro" id="IPR038494">
    <property type="entry name" value="IGPD_sf"/>
</dbReference>
<dbReference type="InterPro" id="IPR000807">
    <property type="entry name" value="ImidazoleglycerolP_deHydtase"/>
</dbReference>
<dbReference type="InterPro" id="IPR020565">
    <property type="entry name" value="ImidazoleglycerP_deHydtase_CS"/>
</dbReference>
<dbReference type="InterPro" id="IPR020568">
    <property type="entry name" value="Ribosomal_Su5_D2-typ_SF"/>
</dbReference>
<dbReference type="NCBIfam" id="NF002107">
    <property type="entry name" value="PRK00951.1-2"/>
    <property type="match status" value="1"/>
</dbReference>
<dbReference type="NCBIfam" id="NF002111">
    <property type="entry name" value="PRK00951.2-1"/>
    <property type="match status" value="1"/>
</dbReference>
<dbReference type="NCBIfam" id="NF002114">
    <property type="entry name" value="PRK00951.2-4"/>
    <property type="match status" value="1"/>
</dbReference>
<dbReference type="NCBIfam" id="NF002115">
    <property type="entry name" value="PRK00951.2-5"/>
    <property type="match status" value="1"/>
</dbReference>
<dbReference type="PANTHER" id="PTHR23133:SF2">
    <property type="entry name" value="IMIDAZOLEGLYCEROL-PHOSPHATE DEHYDRATASE"/>
    <property type="match status" value="1"/>
</dbReference>
<dbReference type="PANTHER" id="PTHR23133">
    <property type="entry name" value="IMIDAZOLEGLYCEROL-PHOSPHATE DEHYDRATASE HIS7"/>
    <property type="match status" value="1"/>
</dbReference>
<dbReference type="Pfam" id="PF00475">
    <property type="entry name" value="IGPD"/>
    <property type="match status" value="1"/>
</dbReference>
<dbReference type="SUPFAM" id="SSF54211">
    <property type="entry name" value="Ribosomal protein S5 domain 2-like"/>
    <property type="match status" value="2"/>
</dbReference>
<dbReference type="PROSITE" id="PS00954">
    <property type="entry name" value="IGP_DEHYDRATASE_1"/>
    <property type="match status" value="1"/>
</dbReference>
<dbReference type="PROSITE" id="PS00955">
    <property type="entry name" value="IGP_DEHYDRATASE_2"/>
    <property type="match status" value="1"/>
</dbReference>
<reference key="1">
    <citation type="submission" date="2003-10" db="EMBL/GenBank/DDBJ databases">
        <title>The complete genome sequence of the alkaliphilic Bacillus clausii KSM-K16.</title>
        <authorList>
            <person name="Takaki Y."/>
            <person name="Kageyama Y."/>
            <person name="Shimamura S."/>
            <person name="Suzuki H."/>
            <person name="Nishi S."/>
            <person name="Hatada Y."/>
            <person name="Kawai S."/>
            <person name="Ito S."/>
            <person name="Horikoshi K."/>
        </authorList>
    </citation>
    <scope>NUCLEOTIDE SEQUENCE [LARGE SCALE GENOMIC DNA]</scope>
    <source>
        <strain>KSM-K16</strain>
    </source>
</reference>
<protein>
    <recommendedName>
        <fullName evidence="1">Imidazoleglycerol-phosphate dehydratase</fullName>
        <shortName evidence="1">IGPD</shortName>
        <ecNumber evidence="1">4.2.1.19</ecNumber>
    </recommendedName>
</protein>
<accession>Q5WDH9</accession>
<organism>
    <name type="scientific">Shouchella clausii (strain KSM-K16)</name>
    <name type="common">Alkalihalobacillus clausii</name>
    <dbReference type="NCBI Taxonomy" id="66692"/>
    <lineage>
        <taxon>Bacteria</taxon>
        <taxon>Bacillati</taxon>
        <taxon>Bacillota</taxon>
        <taxon>Bacilli</taxon>
        <taxon>Bacillales</taxon>
        <taxon>Bacillaceae</taxon>
        <taxon>Shouchella</taxon>
    </lineage>
</organism>
<keyword id="KW-0028">Amino-acid biosynthesis</keyword>
<keyword id="KW-0963">Cytoplasm</keyword>
<keyword id="KW-0368">Histidine biosynthesis</keyword>
<keyword id="KW-0456">Lyase</keyword>
<keyword id="KW-1185">Reference proteome</keyword>
<feature type="chain" id="PRO_0000158109" description="Imidazoleglycerol-phosphate dehydratase">
    <location>
        <begin position="1"/>
        <end position="195"/>
    </location>
</feature>